<protein>
    <recommendedName>
        <fullName evidence="1">Ribonuclease HII</fullName>
        <shortName evidence="1">RNase HII</shortName>
        <ecNumber evidence="1">3.1.26.4</ecNumber>
    </recommendedName>
</protein>
<name>RNH2_BACMK</name>
<reference key="1">
    <citation type="journal article" date="2008" name="Chem. Biol. Interact.">
        <title>Extending the Bacillus cereus group genomics to putative food-borne pathogens of different toxicity.</title>
        <authorList>
            <person name="Lapidus A."/>
            <person name="Goltsman E."/>
            <person name="Auger S."/>
            <person name="Galleron N."/>
            <person name="Segurens B."/>
            <person name="Dossat C."/>
            <person name="Land M.L."/>
            <person name="Broussolle V."/>
            <person name="Brillard J."/>
            <person name="Guinebretiere M.-H."/>
            <person name="Sanchis V."/>
            <person name="Nguen-the C."/>
            <person name="Lereclus D."/>
            <person name="Richardson P."/>
            <person name="Wincker P."/>
            <person name="Weissenbach J."/>
            <person name="Ehrlich S.D."/>
            <person name="Sorokin A."/>
        </authorList>
    </citation>
    <scope>NUCLEOTIDE SEQUENCE [LARGE SCALE GENOMIC DNA]</scope>
    <source>
        <strain>KBAB4</strain>
    </source>
</reference>
<sequence length="257" mass="29116">MQKMTIHEAECLLQEIMNEEDERFQMLVKDERKGVQKLILKWYKQKELAQKEREKFLEMSKYENELREKGLTYIAGIDEVGRGPLAGPVVTAAVVLPEDFYIPGLNDSKKLSEAKRERFYDEIKDHAIAIGVGIISPQVIDEINIYQATKQAMLDAVANLSCTPEYLLIDAMKLPTSIPQTSIIKGDAKSVSISAASIIAKVTRDRMMKELGGKYPAYGFEQHMGYGTKQHLEAIEVHGVLEEHRKSFAPIKDMIQK</sequence>
<accession>A9VT75</accession>
<organism>
    <name type="scientific">Bacillus mycoides (strain KBAB4)</name>
    <name type="common">Bacillus weihenstephanensis</name>
    <dbReference type="NCBI Taxonomy" id="315730"/>
    <lineage>
        <taxon>Bacteria</taxon>
        <taxon>Bacillati</taxon>
        <taxon>Bacillota</taxon>
        <taxon>Bacilli</taxon>
        <taxon>Bacillales</taxon>
        <taxon>Bacillaceae</taxon>
        <taxon>Bacillus</taxon>
        <taxon>Bacillus cereus group</taxon>
    </lineage>
</organism>
<keyword id="KW-0963">Cytoplasm</keyword>
<keyword id="KW-0255">Endonuclease</keyword>
<keyword id="KW-0378">Hydrolase</keyword>
<keyword id="KW-0464">Manganese</keyword>
<keyword id="KW-0479">Metal-binding</keyword>
<keyword id="KW-0540">Nuclease</keyword>
<gene>
    <name evidence="1" type="primary">rnhB</name>
    <name type="ordered locus">BcerKBAB4_3660</name>
</gene>
<proteinExistence type="inferred from homology"/>
<dbReference type="EC" id="3.1.26.4" evidence="1"/>
<dbReference type="EMBL" id="CP000903">
    <property type="protein sequence ID" value="ABY44831.1"/>
    <property type="molecule type" value="Genomic_DNA"/>
</dbReference>
<dbReference type="RefSeq" id="WP_002142917.1">
    <property type="nucleotide sequence ID" value="NC_010184.1"/>
</dbReference>
<dbReference type="SMR" id="A9VT75"/>
<dbReference type="KEGG" id="bwe:BcerKBAB4_3660"/>
<dbReference type="eggNOG" id="COG0164">
    <property type="taxonomic scope" value="Bacteria"/>
</dbReference>
<dbReference type="HOGENOM" id="CLU_036532_2_1_9"/>
<dbReference type="Proteomes" id="UP000002154">
    <property type="component" value="Chromosome"/>
</dbReference>
<dbReference type="GO" id="GO:0005737">
    <property type="term" value="C:cytoplasm"/>
    <property type="evidence" value="ECO:0007669"/>
    <property type="project" value="UniProtKB-SubCell"/>
</dbReference>
<dbReference type="GO" id="GO:0032299">
    <property type="term" value="C:ribonuclease H2 complex"/>
    <property type="evidence" value="ECO:0007669"/>
    <property type="project" value="TreeGrafter"/>
</dbReference>
<dbReference type="GO" id="GO:0030145">
    <property type="term" value="F:manganese ion binding"/>
    <property type="evidence" value="ECO:0007669"/>
    <property type="project" value="UniProtKB-UniRule"/>
</dbReference>
<dbReference type="GO" id="GO:0003723">
    <property type="term" value="F:RNA binding"/>
    <property type="evidence" value="ECO:0007669"/>
    <property type="project" value="InterPro"/>
</dbReference>
<dbReference type="GO" id="GO:0004523">
    <property type="term" value="F:RNA-DNA hybrid ribonuclease activity"/>
    <property type="evidence" value="ECO:0007669"/>
    <property type="project" value="UniProtKB-UniRule"/>
</dbReference>
<dbReference type="GO" id="GO:0043137">
    <property type="term" value="P:DNA replication, removal of RNA primer"/>
    <property type="evidence" value="ECO:0007669"/>
    <property type="project" value="TreeGrafter"/>
</dbReference>
<dbReference type="GO" id="GO:0006298">
    <property type="term" value="P:mismatch repair"/>
    <property type="evidence" value="ECO:0007669"/>
    <property type="project" value="TreeGrafter"/>
</dbReference>
<dbReference type="CDD" id="cd07182">
    <property type="entry name" value="RNase_HII_bacteria_HII_like"/>
    <property type="match status" value="1"/>
</dbReference>
<dbReference type="FunFam" id="3.30.420.10:FF:000006">
    <property type="entry name" value="Ribonuclease HII"/>
    <property type="match status" value="1"/>
</dbReference>
<dbReference type="Gene3D" id="3.30.420.10">
    <property type="entry name" value="Ribonuclease H-like superfamily/Ribonuclease H"/>
    <property type="match status" value="1"/>
</dbReference>
<dbReference type="HAMAP" id="MF_00052_B">
    <property type="entry name" value="RNase_HII_B"/>
    <property type="match status" value="1"/>
</dbReference>
<dbReference type="InterPro" id="IPR022898">
    <property type="entry name" value="RNase_HII"/>
</dbReference>
<dbReference type="InterPro" id="IPR001352">
    <property type="entry name" value="RNase_HII/HIII"/>
</dbReference>
<dbReference type="InterPro" id="IPR024567">
    <property type="entry name" value="RNase_HII/HIII_dom"/>
</dbReference>
<dbReference type="InterPro" id="IPR012337">
    <property type="entry name" value="RNaseH-like_sf"/>
</dbReference>
<dbReference type="InterPro" id="IPR036397">
    <property type="entry name" value="RNaseH_sf"/>
</dbReference>
<dbReference type="NCBIfam" id="NF000594">
    <property type="entry name" value="PRK00015.1-1"/>
    <property type="match status" value="1"/>
</dbReference>
<dbReference type="NCBIfam" id="NF000595">
    <property type="entry name" value="PRK00015.1-3"/>
    <property type="match status" value="1"/>
</dbReference>
<dbReference type="PANTHER" id="PTHR10954">
    <property type="entry name" value="RIBONUCLEASE H2 SUBUNIT A"/>
    <property type="match status" value="1"/>
</dbReference>
<dbReference type="PANTHER" id="PTHR10954:SF18">
    <property type="entry name" value="RIBONUCLEASE HII"/>
    <property type="match status" value="1"/>
</dbReference>
<dbReference type="Pfam" id="PF01351">
    <property type="entry name" value="RNase_HII"/>
    <property type="match status" value="1"/>
</dbReference>
<dbReference type="SUPFAM" id="SSF53098">
    <property type="entry name" value="Ribonuclease H-like"/>
    <property type="match status" value="1"/>
</dbReference>
<dbReference type="PROSITE" id="PS51975">
    <property type="entry name" value="RNASE_H_2"/>
    <property type="match status" value="1"/>
</dbReference>
<evidence type="ECO:0000255" key="1">
    <source>
        <dbReference type="HAMAP-Rule" id="MF_00052"/>
    </source>
</evidence>
<evidence type="ECO:0000255" key="2">
    <source>
        <dbReference type="PROSITE-ProRule" id="PRU01319"/>
    </source>
</evidence>
<feature type="chain" id="PRO_1000091605" description="Ribonuclease HII">
    <location>
        <begin position="1"/>
        <end position="257"/>
    </location>
</feature>
<feature type="domain" description="RNase H type-2" evidence="2">
    <location>
        <begin position="72"/>
        <end position="257"/>
    </location>
</feature>
<feature type="binding site" evidence="1">
    <location>
        <position position="78"/>
    </location>
    <ligand>
        <name>a divalent metal cation</name>
        <dbReference type="ChEBI" id="CHEBI:60240"/>
    </ligand>
</feature>
<feature type="binding site" evidence="1">
    <location>
        <position position="79"/>
    </location>
    <ligand>
        <name>a divalent metal cation</name>
        <dbReference type="ChEBI" id="CHEBI:60240"/>
    </ligand>
</feature>
<feature type="binding site" evidence="1">
    <location>
        <position position="170"/>
    </location>
    <ligand>
        <name>a divalent metal cation</name>
        <dbReference type="ChEBI" id="CHEBI:60240"/>
    </ligand>
</feature>
<comment type="function">
    <text evidence="1">Endonuclease that specifically degrades the RNA of RNA-DNA hybrids.</text>
</comment>
<comment type="catalytic activity">
    <reaction evidence="1">
        <text>Endonucleolytic cleavage to 5'-phosphomonoester.</text>
        <dbReference type="EC" id="3.1.26.4"/>
    </reaction>
</comment>
<comment type="cofactor">
    <cofactor evidence="1">
        <name>Mn(2+)</name>
        <dbReference type="ChEBI" id="CHEBI:29035"/>
    </cofactor>
    <cofactor evidence="1">
        <name>Mg(2+)</name>
        <dbReference type="ChEBI" id="CHEBI:18420"/>
    </cofactor>
    <text evidence="1">Manganese or magnesium. Binds 1 divalent metal ion per monomer in the absence of substrate. May bind a second metal ion after substrate binding.</text>
</comment>
<comment type="subcellular location">
    <subcellularLocation>
        <location evidence="1">Cytoplasm</location>
    </subcellularLocation>
</comment>
<comment type="similarity">
    <text evidence="1">Belongs to the RNase HII family.</text>
</comment>